<sequence length="157" mass="17734">MLRISARFYCKIATQSSFKAAEYKNKIKKDKKLNFTQLLHPTKVPQTPVPAAFSDPSENVVEIDTKTIQLLERLSLVDLDSDQALATLKSSIQFADKIAHIDTQNVRPLYTVLEKQQLQLRNDQVTAGDSRAELLRCAKVTDEDYYVSPPGNIPLEQ</sequence>
<dbReference type="EC" id="6.3.5.-" evidence="1"/>
<dbReference type="EMBL" id="CH940654">
    <property type="protein sequence ID" value="EDW57544.1"/>
    <property type="molecule type" value="Genomic_DNA"/>
</dbReference>
<dbReference type="SMR" id="B4M8L8"/>
<dbReference type="FunCoup" id="B4M8L8">
    <property type="interactions" value="1111"/>
</dbReference>
<dbReference type="STRING" id="7244.B4M8L8"/>
<dbReference type="EnsemblMetazoa" id="FBtr0234011">
    <property type="protein sequence ID" value="FBpp0232503"/>
    <property type="gene ID" value="FBgn0205251"/>
</dbReference>
<dbReference type="EnsemblMetazoa" id="XM_002057435.3">
    <property type="protein sequence ID" value="XP_002057471.1"/>
    <property type="gene ID" value="LOC6634343"/>
</dbReference>
<dbReference type="GeneID" id="6634343"/>
<dbReference type="KEGG" id="dvi:6634343"/>
<dbReference type="CTD" id="283459"/>
<dbReference type="eggNOG" id="KOG4247">
    <property type="taxonomic scope" value="Eukaryota"/>
</dbReference>
<dbReference type="HOGENOM" id="CLU_105899_0_1_1"/>
<dbReference type="InParanoid" id="B4M8L8"/>
<dbReference type="OMA" id="RCAKRTD"/>
<dbReference type="OrthoDB" id="5394539at2759"/>
<dbReference type="PhylomeDB" id="B4M8L8"/>
<dbReference type="Proteomes" id="UP000008792">
    <property type="component" value="Unassembled WGS sequence"/>
</dbReference>
<dbReference type="GO" id="GO:0030956">
    <property type="term" value="C:glutamyl-tRNA(Gln) amidotransferase complex"/>
    <property type="evidence" value="ECO:0007669"/>
    <property type="project" value="UniProtKB-UniRule"/>
</dbReference>
<dbReference type="GO" id="GO:0005739">
    <property type="term" value="C:mitochondrion"/>
    <property type="evidence" value="ECO:0007669"/>
    <property type="project" value="UniProtKB-SubCell"/>
</dbReference>
<dbReference type="GO" id="GO:0005524">
    <property type="term" value="F:ATP binding"/>
    <property type="evidence" value="ECO:0007669"/>
    <property type="project" value="UniProtKB-KW"/>
</dbReference>
<dbReference type="GO" id="GO:0050567">
    <property type="term" value="F:glutaminyl-tRNA synthase (glutamine-hydrolyzing) activity"/>
    <property type="evidence" value="ECO:0007669"/>
    <property type="project" value="UniProtKB-UniRule"/>
</dbReference>
<dbReference type="GO" id="GO:0070681">
    <property type="term" value="P:glutaminyl-tRNAGln biosynthesis via transamidation"/>
    <property type="evidence" value="ECO:0007669"/>
    <property type="project" value="UniProtKB-UniRule"/>
</dbReference>
<dbReference type="GO" id="GO:0032543">
    <property type="term" value="P:mitochondrial translation"/>
    <property type="evidence" value="ECO:0007669"/>
    <property type="project" value="UniProtKB-UniRule"/>
</dbReference>
<dbReference type="GO" id="GO:0006450">
    <property type="term" value="P:regulation of translational fidelity"/>
    <property type="evidence" value="ECO:0007669"/>
    <property type="project" value="InterPro"/>
</dbReference>
<dbReference type="HAMAP" id="MF_00122">
    <property type="entry name" value="GatC"/>
    <property type="match status" value="1"/>
</dbReference>
<dbReference type="InterPro" id="IPR036113">
    <property type="entry name" value="Asp/Glu-ADT_sf_sub_c"/>
</dbReference>
<dbReference type="InterPro" id="IPR003837">
    <property type="entry name" value="GatC"/>
</dbReference>
<dbReference type="NCBIfam" id="TIGR00135">
    <property type="entry name" value="gatC"/>
    <property type="match status" value="1"/>
</dbReference>
<dbReference type="PANTHER" id="PTHR15004">
    <property type="entry name" value="GLUTAMYL-TRNA(GLN) AMIDOTRANSFERASE SUBUNIT C, MITOCHONDRIAL"/>
    <property type="match status" value="1"/>
</dbReference>
<dbReference type="PANTHER" id="PTHR15004:SF0">
    <property type="entry name" value="GLUTAMYL-TRNA(GLN) AMIDOTRANSFERASE SUBUNIT C, MITOCHONDRIAL"/>
    <property type="match status" value="1"/>
</dbReference>
<dbReference type="Pfam" id="PF02686">
    <property type="entry name" value="GatC"/>
    <property type="match status" value="1"/>
</dbReference>
<dbReference type="SUPFAM" id="SSF141000">
    <property type="entry name" value="Glu-tRNAGln amidotransferase C subunit"/>
    <property type="match status" value="1"/>
</dbReference>
<accession>B4M8L8</accession>
<reference key="1">
    <citation type="journal article" date="2007" name="Nature">
        <title>Evolution of genes and genomes on the Drosophila phylogeny.</title>
        <authorList>
            <consortium name="Drosophila 12 genomes consortium"/>
        </authorList>
    </citation>
    <scope>NUCLEOTIDE SEQUENCE [LARGE SCALE GENOMIC DNA]</scope>
    <source>
        <strain>Tucson 15010-1051.87</strain>
    </source>
</reference>
<protein>
    <recommendedName>
        <fullName evidence="1">Glutamyl-tRNA(Gln) amidotransferase subunit C, mitochondrial</fullName>
        <shortName evidence="1">Glu-AdT subunit C</shortName>
        <ecNumber evidence="1">6.3.5.-</ecNumber>
    </recommendedName>
</protein>
<feature type="chain" id="PRO_0000413309" description="Glutamyl-tRNA(Gln) amidotransferase subunit C, mitochondrial">
    <location>
        <begin position="1"/>
        <end position="157"/>
    </location>
</feature>
<keyword id="KW-0067">ATP-binding</keyword>
<keyword id="KW-0436">Ligase</keyword>
<keyword id="KW-0496">Mitochondrion</keyword>
<keyword id="KW-0547">Nucleotide-binding</keyword>
<keyword id="KW-0648">Protein biosynthesis</keyword>
<keyword id="KW-1185">Reference proteome</keyword>
<proteinExistence type="inferred from homology"/>
<comment type="function">
    <text evidence="1">Allows the formation of correctly charged Gln-tRNA(Gln) through the transamidation of misacylated Glu-tRNA(Gln) in the mitochondria. The reaction takes place in the presence of glutamine and ATP through an activated gamma-phospho-Glu-tRNA(Gln).</text>
</comment>
<comment type="catalytic activity">
    <reaction evidence="1">
        <text>L-glutamyl-tRNA(Gln) + L-glutamine + ATP + H2O = L-glutaminyl-tRNA(Gln) + L-glutamate + ADP + phosphate + H(+)</text>
        <dbReference type="Rhea" id="RHEA:17521"/>
        <dbReference type="Rhea" id="RHEA-COMP:9681"/>
        <dbReference type="Rhea" id="RHEA-COMP:9684"/>
        <dbReference type="ChEBI" id="CHEBI:15377"/>
        <dbReference type="ChEBI" id="CHEBI:15378"/>
        <dbReference type="ChEBI" id="CHEBI:29985"/>
        <dbReference type="ChEBI" id="CHEBI:30616"/>
        <dbReference type="ChEBI" id="CHEBI:43474"/>
        <dbReference type="ChEBI" id="CHEBI:58359"/>
        <dbReference type="ChEBI" id="CHEBI:78520"/>
        <dbReference type="ChEBI" id="CHEBI:78521"/>
        <dbReference type="ChEBI" id="CHEBI:456216"/>
    </reaction>
</comment>
<comment type="subunit">
    <text evidence="1">Subunit of the heterotrimeric GatCAB amidotransferase (AdT) complex, composed of A, B and C subunits.</text>
</comment>
<comment type="subcellular location">
    <subcellularLocation>
        <location evidence="1">Mitochondrion</location>
    </subcellularLocation>
</comment>
<comment type="miscellaneous">
    <text evidence="1">This protein may be expected to contain an N-terminal transit peptide but none has been predicted.</text>
</comment>
<comment type="similarity">
    <text evidence="1">Belongs to the GatC family.</text>
</comment>
<name>GATC_DROVI</name>
<organism>
    <name type="scientific">Drosophila virilis</name>
    <name type="common">Fruit fly</name>
    <dbReference type="NCBI Taxonomy" id="7244"/>
    <lineage>
        <taxon>Eukaryota</taxon>
        <taxon>Metazoa</taxon>
        <taxon>Ecdysozoa</taxon>
        <taxon>Arthropoda</taxon>
        <taxon>Hexapoda</taxon>
        <taxon>Insecta</taxon>
        <taxon>Pterygota</taxon>
        <taxon>Neoptera</taxon>
        <taxon>Endopterygota</taxon>
        <taxon>Diptera</taxon>
        <taxon>Brachycera</taxon>
        <taxon>Muscomorpha</taxon>
        <taxon>Ephydroidea</taxon>
        <taxon>Drosophilidae</taxon>
        <taxon>Drosophila</taxon>
    </lineage>
</organism>
<gene>
    <name type="ORF">GJ18086</name>
</gene>
<evidence type="ECO:0000255" key="1">
    <source>
        <dbReference type="HAMAP-Rule" id="MF_03149"/>
    </source>
</evidence>